<reference key="1">
    <citation type="journal article" date="2005" name="Eur. J. Immunol.">
        <title>Variety of antimicrobial peptides in the Bombina maxima toad and evidence of their rapid diversification.</title>
        <authorList>
            <person name="Lee W.-H."/>
            <person name="Li Y."/>
            <person name="Lai R."/>
            <person name="Li S."/>
            <person name="Zhang Y."/>
            <person name="Wang W."/>
        </authorList>
    </citation>
    <scope>NUCLEOTIDE SEQUENCE [MRNA]</scope>
    <scope>AMIDATION AT ASN-70 AND ILE-138</scope>
    <source>
        <tissue>Skin</tissue>
    </source>
</reference>
<reference key="2">
    <citation type="submission" date="2001-07" db="UniProtKB">
        <title>Isolation and structural characterisation of antimicrobial peptides from the venom of the Chinese large-webbed bell toad (Bombina maxima).</title>
        <authorList>
            <person name="Chen T.B."/>
            <person name="McClean S."/>
            <person name="Orr D.F."/>
            <person name="Bjourson A.J."/>
            <person name="Rao P.F."/>
            <person name="Shaw C."/>
        </authorList>
    </citation>
    <scope>PROTEIN SEQUENCE OF 44-70</scope>
    <scope>FUNCTION OF MAXIMIN-4</scope>
    <scope>SUBCELLULAR LOCATION</scope>
    <scope>TISSUE SPECIFICITY</scope>
    <source>
        <tissue>Skin secretion</tissue>
    </source>
</reference>
<reference key="3">
    <citation type="journal article" date="2002" name="Peptides">
        <title>Antimicrobial peptides from skin secretions of Chinese red belly toad Bombina maxima.</title>
        <authorList>
            <person name="Lai R."/>
            <person name="Zheng Y.-T."/>
            <person name="Shen J.-H."/>
            <person name="Liu G.-J."/>
            <person name="Liu H."/>
            <person name="Lee W.-H."/>
            <person name="Tang S.-Z."/>
            <person name="Zhang Y."/>
        </authorList>
    </citation>
    <scope>PROTEIN SEQUENCE OF 44-70 AND 119-138</scope>
    <scope>AMIDATION AT ASN-70 AND ILE-138</scope>
    <scope>FUNCTION OF MAXIMIN-4 AND MAXIMIN-H3</scope>
    <scope>MASS SPECTROMETRY</scope>
    <source>
        <tissue>Skin</tissue>
        <tissue>Skin secretion</tissue>
    </source>
</reference>
<sequence length="139" mass="15285">MNFKYIFAVSFLIASAYARSVQNDEQSLSQRDVLEEESLREIRGIGGVLLSAGKAALKGLAKVLAEKYANGKRTAEEHEVMKRLEAVMRDLDSLDHPEEASERETRGFNQDEIAKEKRILGPVLGLVGNALGGLIKKIG</sequence>
<keyword id="KW-0027">Amidation</keyword>
<keyword id="KW-0878">Amphibian defense peptide</keyword>
<keyword id="KW-0044">Antibiotic</keyword>
<keyword id="KW-0929">Antimicrobial</keyword>
<keyword id="KW-0165">Cleavage on pair of basic residues</keyword>
<keyword id="KW-0204">Cytolysis</keyword>
<keyword id="KW-0903">Direct protein sequencing</keyword>
<keyword id="KW-0295">Fungicide</keyword>
<keyword id="KW-0354">Hemolysis</keyword>
<keyword id="KW-0964">Secreted</keyword>
<keyword id="KW-0732">Signal</keyword>
<organism>
    <name type="scientific">Bombina maxima</name>
    <name type="common">Giant fire-bellied toad</name>
    <name type="synonym">Chinese red belly toad</name>
    <dbReference type="NCBI Taxonomy" id="161274"/>
    <lineage>
        <taxon>Eukaryota</taxon>
        <taxon>Metazoa</taxon>
        <taxon>Chordata</taxon>
        <taxon>Craniata</taxon>
        <taxon>Vertebrata</taxon>
        <taxon>Euteleostomi</taxon>
        <taxon>Amphibia</taxon>
        <taxon>Batrachia</taxon>
        <taxon>Anura</taxon>
        <taxon>Bombinatoridae</taxon>
        <taxon>Bombina</taxon>
    </lineage>
</organism>
<comment type="function">
    <text>Maximin-4 shows antibacterial activity against both Gram-positive and Gram-negative bacteria. It also shows antimicrobial activity against the fungus C.albicans, but not against A.flavus nor P.uticale. It has little hemolytic activity. It does not possess a significant cytotoxicity against tumor cell lines. It does not possess a significant anti-HIV activity.</text>
</comment>
<comment type="function">
    <text>Maximin-H3 shows antibacterial activity against both Gram-positive and Gram-negative bacteria. It also shows antimicrobial activity against the fungus C.albicans. Shows strong hemolytic activity.</text>
</comment>
<comment type="subcellular location">
    <subcellularLocation>
        <location evidence="4">Secreted</location>
    </subcellularLocation>
</comment>
<comment type="tissue specificity">
    <text evidence="4">Expressed by the skin glands.</text>
</comment>
<comment type="mass spectrometry" mass="2612.0" method="FAB" evidence="2">
    <molecule>Maximin-4</molecule>
</comment>
<comment type="mass spectrometry" mass="1944.0" method="FAB" evidence="2">
    <molecule>Maximin-H3</molecule>
</comment>
<comment type="similarity">
    <text evidence="5">Belongs to the bombinin family.</text>
</comment>
<evidence type="ECO:0000255" key="1"/>
<evidence type="ECO:0000269" key="2">
    <source>
    </source>
</evidence>
<evidence type="ECO:0000269" key="3">
    <source>
    </source>
</evidence>
<evidence type="ECO:0000269" key="4">
    <source ref="2"/>
</evidence>
<evidence type="ECO:0000305" key="5"/>
<protein>
    <recommendedName>
        <fullName>Maximins 4/H3 type 5</fullName>
    </recommendedName>
    <component>
        <recommendedName>
            <fullName>Maximin-4</fullName>
        </recommendedName>
    </component>
    <component>
        <recommendedName>
            <fullName>Maximin-H3</fullName>
        </recommendedName>
    </component>
</protein>
<name>M4H35_BOMMX</name>
<proteinExistence type="evidence at protein level"/>
<feature type="signal peptide" evidence="1">
    <location>
        <begin position="1"/>
        <end position="18"/>
    </location>
</feature>
<feature type="propeptide" id="PRO_0000003168">
    <location>
        <begin position="19"/>
        <end position="43"/>
    </location>
</feature>
<feature type="peptide" id="PRO_0000003169" description="Maximin-4">
    <location>
        <begin position="44"/>
        <end position="70"/>
    </location>
</feature>
<feature type="propeptide" id="PRO_0000003170" evidence="2">
    <location>
        <begin position="74"/>
        <end position="118"/>
    </location>
</feature>
<feature type="peptide" id="PRO_0000003171" description="Maximin-H3">
    <location>
        <begin position="119"/>
        <end position="138"/>
    </location>
</feature>
<feature type="modified residue" description="Asparagine amide" evidence="2 3">
    <location>
        <position position="70"/>
    </location>
</feature>
<feature type="modified residue" description="Isoleucine amide" evidence="2 3">
    <location>
        <position position="138"/>
    </location>
</feature>
<accession>Q58T44</accession>
<dbReference type="EMBL" id="AY849016">
    <property type="protein sequence ID" value="AAX50237.1"/>
    <property type="molecule type" value="mRNA"/>
</dbReference>
<dbReference type="SMR" id="Q58T44"/>
<dbReference type="GO" id="GO:0005576">
    <property type="term" value="C:extracellular region"/>
    <property type="evidence" value="ECO:0007669"/>
    <property type="project" value="UniProtKB-SubCell"/>
</dbReference>
<dbReference type="GO" id="GO:0042742">
    <property type="term" value="P:defense response to bacterium"/>
    <property type="evidence" value="ECO:0007669"/>
    <property type="project" value="UniProtKB-KW"/>
</dbReference>
<dbReference type="GO" id="GO:0050832">
    <property type="term" value="P:defense response to fungus"/>
    <property type="evidence" value="ECO:0007669"/>
    <property type="project" value="UniProtKB-KW"/>
</dbReference>
<dbReference type="GO" id="GO:0031640">
    <property type="term" value="P:killing of cells of another organism"/>
    <property type="evidence" value="ECO:0007669"/>
    <property type="project" value="UniProtKB-KW"/>
</dbReference>
<dbReference type="InterPro" id="IPR007962">
    <property type="entry name" value="Bombinin"/>
</dbReference>
<dbReference type="Pfam" id="PF05298">
    <property type="entry name" value="Bombinin"/>
    <property type="match status" value="1"/>
</dbReference>